<protein>
    <recommendedName>
        <fullName>Transmembrane protein 126A</fullName>
    </recommendedName>
</protein>
<dbReference type="EMBL" id="BC109704">
    <property type="protein sequence ID" value="AAI09705.1"/>
    <property type="molecule type" value="mRNA"/>
</dbReference>
<dbReference type="RefSeq" id="NP_001032697.1">
    <property type="nucleotide sequence ID" value="NM_001037608.2"/>
</dbReference>
<dbReference type="FunCoup" id="Q32L86">
    <property type="interactions" value="1638"/>
</dbReference>
<dbReference type="STRING" id="9913.ENSBTAP00000000576"/>
<dbReference type="PaxDb" id="9913-ENSBTAP00000000576"/>
<dbReference type="GeneID" id="529762"/>
<dbReference type="KEGG" id="bta:529762"/>
<dbReference type="CTD" id="84233"/>
<dbReference type="VEuPathDB" id="HostDB:ENSBTAG00000000451"/>
<dbReference type="eggNOG" id="ENOG502RYF0">
    <property type="taxonomic scope" value="Eukaryota"/>
</dbReference>
<dbReference type="HOGENOM" id="CLU_105475_1_0_1"/>
<dbReference type="InParanoid" id="Q32L86"/>
<dbReference type="OMA" id="GDLHCET"/>
<dbReference type="OrthoDB" id="6234762at2759"/>
<dbReference type="TreeFam" id="TF327069"/>
<dbReference type="Proteomes" id="UP000009136">
    <property type="component" value="Chromosome 29"/>
</dbReference>
<dbReference type="Bgee" id="ENSBTAG00000000451">
    <property type="expression patterns" value="Expressed in tongue muscle and 105 other cell types or tissues"/>
</dbReference>
<dbReference type="GO" id="GO:0005743">
    <property type="term" value="C:mitochondrial inner membrane"/>
    <property type="evidence" value="ECO:0000250"/>
    <property type="project" value="UniProtKB"/>
</dbReference>
<dbReference type="GO" id="GO:0005739">
    <property type="term" value="C:mitochondrion"/>
    <property type="evidence" value="ECO:0000250"/>
    <property type="project" value="UniProtKB"/>
</dbReference>
<dbReference type="GO" id="GO:0141164">
    <property type="term" value="P:mitochondrial protein quality control"/>
    <property type="evidence" value="ECO:0000250"/>
    <property type="project" value="UniProtKB"/>
</dbReference>
<dbReference type="GO" id="GO:0032981">
    <property type="term" value="P:mitochondrial respiratory chain complex I assembly"/>
    <property type="evidence" value="ECO:0000250"/>
    <property type="project" value="UniProtKB"/>
</dbReference>
<dbReference type="GO" id="GO:0032979">
    <property type="term" value="P:protein insertion into mitochondrial inner membrane from matrix"/>
    <property type="evidence" value="ECO:0000250"/>
    <property type="project" value="UniProtKB"/>
</dbReference>
<dbReference type="InterPro" id="IPR009801">
    <property type="entry name" value="TMEM126"/>
</dbReference>
<dbReference type="PANTHER" id="PTHR16296:SF4">
    <property type="entry name" value="TRANSMEMBRANE PROTEIN 126A"/>
    <property type="match status" value="1"/>
</dbReference>
<dbReference type="PANTHER" id="PTHR16296">
    <property type="entry name" value="UNCHARACTERIZED HYPOTHALAMUS PROTEIN HT007"/>
    <property type="match status" value="1"/>
</dbReference>
<dbReference type="Pfam" id="PF07114">
    <property type="entry name" value="TMEM126"/>
    <property type="match status" value="1"/>
</dbReference>
<sequence>MENHEPDGTIIKENLTDIIARKINQLPEAERNLLENGSTYVGLNAALCGLIANSLFRRILHVTQARIAAGLPMAVIPFLTANVSYKGFVSLPLNTGDLQCETCTVTRGGLVGLVFGGLYPVFLAIPVNGGLAARYNSALLPEKGNILNYWIRISKPVFRKMLFPILLQTGFAAYLGSRQYKLLIKALQLPEPGLEIE</sequence>
<name>T126A_BOVIN</name>
<evidence type="ECO:0000250" key="1">
    <source>
        <dbReference type="UniProtKB" id="Q9H061"/>
    </source>
</evidence>
<evidence type="ECO:0000255" key="2"/>
<evidence type="ECO:0000305" key="3"/>
<keyword id="KW-0472">Membrane</keyword>
<keyword id="KW-0496">Mitochondrion</keyword>
<keyword id="KW-0999">Mitochondrion inner membrane</keyword>
<keyword id="KW-1185">Reference proteome</keyword>
<keyword id="KW-0812">Transmembrane</keyword>
<keyword id="KW-1133">Transmembrane helix</keyword>
<gene>
    <name type="primary">TMEM126A</name>
</gene>
<feature type="chain" id="PRO_0000270998" description="Transmembrane protein 126A">
    <location>
        <begin position="1"/>
        <end position="197"/>
    </location>
</feature>
<feature type="topological domain" description="Mitochondrial matrix" evidence="2">
    <location>
        <begin position="1"/>
        <end position="35"/>
    </location>
</feature>
<feature type="transmembrane region" description="Helical" evidence="2">
    <location>
        <begin position="36"/>
        <end position="56"/>
    </location>
</feature>
<feature type="topological domain" description="Mitochondrial intermembrane" evidence="2">
    <location>
        <begin position="57"/>
        <end position="58"/>
    </location>
</feature>
<feature type="transmembrane region" description="Helical" evidence="2">
    <location>
        <begin position="59"/>
        <end position="79"/>
    </location>
</feature>
<feature type="topological domain" description="Mitochondrial matrix" evidence="2">
    <location>
        <begin position="80"/>
        <end position="107"/>
    </location>
</feature>
<feature type="transmembrane region" description="Helical" evidence="2">
    <location>
        <begin position="108"/>
        <end position="128"/>
    </location>
</feature>
<feature type="topological domain" description="Mitochondrial intermembrane" evidence="2">
    <location>
        <begin position="129"/>
        <end position="160"/>
    </location>
</feature>
<feature type="transmembrane region" description="Helical" evidence="2">
    <location>
        <begin position="161"/>
        <end position="177"/>
    </location>
</feature>
<feature type="topological domain" description="Mitochondrial matrix" evidence="2">
    <location>
        <begin position="178"/>
        <end position="197"/>
    </location>
</feature>
<organism>
    <name type="scientific">Bos taurus</name>
    <name type="common">Bovine</name>
    <dbReference type="NCBI Taxonomy" id="9913"/>
    <lineage>
        <taxon>Eukaryota</taxon>
        <taxon>Metazoa</taxon>
        <taxon>Chordata</taxon>
        <taxon>Craniata</taxon>
        <taxon>Vertebrata</taxon>
        <taxon>Euteleostomi</taxon>
        <taxon>Mammalia</taxon>
        <taxon>Eutheria</taxon>
        <taxon>Laurasiatheria</taxon>
        <taxon>Artiodactyla</taxon>
        <taxon>Ruminantia</taxon>
        <taxon>Pecora</taxon>
        <taxon>Bovidae</taxon>
        <taxon>Bovinae</taxon>
        <taxon>Bos</taxon>
    </lineage>
</organism>
<reference key="1">
    <citation type="submission" date="2005-11" db="EMBL/GenBank/DDBJ databases">
        <authorList>
            <consortium name="NIH - Mammalian Gene Collection (MGC) project"/>
        </authorList>
    </citation>
    <scope>NUCLEOTIDE SEQUENCE [LARGE SCALE MRNA]</scope>
    <source>
        <strain>Crossbred X Angus</strain>
        <tissue>Liver</tissue>
    </source>
</reference>
<proteinExistence type="evidence at transcript level"/>
<comment type="function">
    <text evidence="1">Protein required for the cotranslational protein quality control in the inner membrane of the mitochondria. Associates with newly synthesized polypeptides and may act as a chaperone that cooperates with OXA1L for the insertion of newly synthesized mitochondrial proteins into the inner membrane. Required for the assembly of the ND4 module of mitochondrial complex I.</text>
</comment>
<comment type="subunit">
    <text evidence="1">Interacts with OXA1L; promoting cotranslational quality control in mitochondria.</text>
</comment>
<comment type="subcellular location">
    <subcellularLocation>
        <location evidence="1">Mitochondrion inner membrane</location>
        <topology evidence="1">Multi-pass membrane protein</topology>
    </subcellularLocation>
</comment>
<comment type="similarity">
    <text evidence="3">Belongs to the TMEM126 family.</text>
</comment>
<accession>Q32L86</accession>